<feature type="chain" id="PRO_1000089174" description="Endoribonuclease YbeY">
    <location>
        <begin position="1"/>
        <end position="155"/>
    </location>
</feature>
<feature type="binding site" evidence="1">
    <location>
        <position position="114"/>
    </location>
    <ligand>
        <name>Zn(2+)</name>
        <dbReference type="ChEBI" id="CHEBI:29105"/>
        <note>catalytic</note>
    </ligand>
</feature>
<feature type="binding site" evidence="1">
    <location>
        <position position="118"/>
    </location>
    <ligand>
        <name>Zn(2+)</name>
        <dbReference type="ChEBI" id="CHEBI:29105"/>
        <note>catalytic</note>
    </ligand>
</feature>
<feature type="binding site" evidence="1">
    <location>
        <position position="124"/>
    </location>
    <ligand>
        <name>Zn(2+)</name>
        <dbReference type="ChEBI" id="CHEBI:29105"/>
        <note>catalytic</note>
    </ligand>
</feature>
<gene>
    <name evidence="1" type="primary">ybeY</name>
    <name type="ordered locus">ECSE_0730</name>
</gene>
<reference key="1">
    <citation type="journal article" date="2008" name="DNA Res.">
        <title>Complete genome sequence and comparative analysis of the wild-type commensal Escherichia coli strain SE11 isolated from a healthy adult.</title>
        <authorList>
            <person name="Oshima K."/>
            <person name="Toh H."/>
            <person name="Ogura Y."/>
            <person name="Sasamoto H."/>
            <person name="Morita H."/>
            <person name="Park S.-H."/>
            <person name="Ooka T."/>
            <person name="Iyoda S."/>
            <person name="Taylor T.D."/>
            <person name="Hayashi T."/>
            <person name="Itoh K."/>
            <person name="Hattori M."/>
        </authorList>
    </citation>
    <scope>NUCLEOTIDE SEQUENCE [LARGE SCALE GENOMIC DNA]</scope>
    <source>
        <strain>SE11</strain>
    </source>
</reference>
<evidence type="ECO:0000255" key="1">
    <source>
        <dbReference type="HAMAP-Rule" id="MF_00009"/>
    </source>
</evidence>
<proteinExistence type="inferred from homology"/>
<comment type="function">
    <text evidence="1">Single strand-specific metallo-endoribonuclease involved in late-stage 70S ribosome quality control and in maturation of the 3' terminus of the 16S rRNA.</text>
</comment>
<comment type="cofactor">
    <cofactor evidence="1">
        <name>Zn(2+)</name>
        <dbReference type="ChEBI" id="CHEBI:29105"/>
    </cofactor>
    <text evidence="1">Binds 1 zinc ion.</text>
</comment>
<comment type="subcellular location">
    <subcellularLocation>
        <location evidence="1">Cytoplasm</location>
    </subcellularLocation>
</comment>
<comment type="similarity">
    <text evidence="1">Belongs to the endoribonuclease YbeY family.</text>
</comment>
<accession>B6HYM8</accession>
<protein>
    <recommendedName>
        <fullName evidence="1">Endoribonuclease YbeY</fullName>
        <ecNumber evidence="1">3.1.-.-</ecNumber>
    </recommendedName>
</protein>
<dbReference type="EC" id="3.1.-.-" evidence="1"/>
<dbReference type="EMBL" id="AP009240">
    <property type="protein sequence ID" value="BAG76254.1"/>
    <property type="molecule type" value="Genomic_DNA"/>
</dbReference>
<dbReference type="RefSeq" id="WP_000084469.1">
    <property type="nucleotide sequence ID" value="NC_011415.1"/>
</dbReference>
<dbReference type="SMR" id="B6HYM8"/>
<dbReference type="GeneID" id="93776823"/>
<dbReference type="KEGG" id="ecy:ECSE_0730"/>
<dbReference type="HOGENOM" id="CLU_106710_0_1_6"/>
<dbReference type="Proteomes" id="UP000008199">
    <property type="component" value="Chromosome"/>
</dbReference>
<dbReference type="GO" id="GO:0005737">
    <property type="term" value="C:cytoplasm"/>
    <property type="evidence" value="ECO:0007669"/>
    <property type="project" value="UniProtKB-SubCell"/>
</dbReference>
<dbReference type="GO" id="GO:0004222">
    <property type="term" value="F:metalloendopeptidase activity"/>
    <property type="evidence" value="ECO:0007669"/>
    <property type="project" value="InterPro"/>
</dbReference>
<dbReference type="GO" id="GO:0004521">
    <property type="term" value="F:RNA endonuclease activity"/>
    <property type="evidence" value="ECO:0007669"/>
    <property type="project" value="UniProtKB-UniRule"/>
</dbReference>
<dbReference type="GO" id="GO:0008270">
    <property type="term" value="F:zinc ion binding"/>
    <property type="evidence" value="ECO:0007669"/>
    <property type="project" value="UniProtKB-UniRule"/>
</dbReference>
<dbReference type="GO" id="GO:0006364">
    <property type="term" value="P:rRNA processing"/>
    <property type="evidence" value="ECO:0007669"/>
    <property type="project" value="UniProtKB-UniRule"/>
</dbReference>
<dbReference type="FunFam" id="3.40.390.30:FF:000001">
    <property type="entry name" value="Endoribonuclease YbeY"/>
    <property type="match status" value="1"/>
</dbReference>
<dbReference type="Gene3D" id="3.40.390.30">
    <property type="entry name" value="Metalloproteases ('zincins'), catalytic domain"/>
    <property type="match status" value="1"/>
</dbReference>
<dbReference type="HAMAP" id="MF_00009">
    <property type="entry name" value="Endoribonucl_YbeY"/>
    <property type="match status" value="1"/>
</dbReference>
<dbReference type="InterPro" id="IPR023091">
    <property type="entry name" value="MetalPrtase_cat_dom_sf_prd"/>
</dbReference>
<dbReference type="InterPro" id="IPR002036">
    <property type="entry name" value="YbeY"/>
</dbReference>
<dbReference type="InterPro" id="IPR020549">
    <property type="entry name" value="YbeY_CS"/>
</dbReference>
<dbReference type="NCBIfam" id="TIGR00043">
    <property type="entry name" value="rRNA maturation RNase YbeY"/>
    <property type="match status" value="1"/>
</dbReference>
<dbReference type="PANTHER" id="PTHR46986">
    <property type="entry name" value="ENDORIBONUCLEASE YBEY, CHLOROPLASTIC"/>
    <property type="match status" value="1"/>
</dbReference>
<dbReference type="PANTHER" id="PTHR46986:SF1">
    <property type="entry name" value="ENDORIBONUCLEASE YBEY, CHLOROPLASTIC"/>
    <property type="match status" value="1"/>
</dbReference>
<dbReference type="Pfam" id="PF02130">
    <property type="entry name" value="YbeY"/>
    <property type="match status" value="1"/>
</dbReference>
<dbReference type="SUPFAM" id="SSF55486">
    <property type="entry name" value="Metalloproteases ('zincins'), catalytic domain"/>
    <property type="match status" value="1"/>
</dbReference>
<dbReference type="PROSITE" id="PS01306">
    <property type="entry name" value="UPF0054"/>
    <property type="match status" value="1"/>
</dbReference>
<name>YBEY_ECOSE</name>
<organism>
    <name type="scientific">Escherichia coli (strain SE11)</name>
    <dbReference type="NCBI Taxonomy" id="409438"/>
    <lineage>
        <taxon>Bacteria</taxon>
        <taxon>Pseudomonadati</taxon>
        <taxon>Pseudomonadota</taxon>
        <taxon>Gammaproteobacteria</taxon>
        <taxon>Enterobacterales</taxon>
        <taxon>Enterobacteriaceae</taxon>
        <taxon>Escherichia</taxon>
    </lineage>
</organism>
<sequence>MSQVILDLQLACEDNSGLPEESQFQTWLNAVIPQFQEESEVTIRVVDTAESHSLNLTYRGKDKPTNVLSFPFEVPPGMEMSLLGDLVICRQVVEKEAQEQGKPLEAHWAHMVVHGSLHLLGYDHIEDDEAEEMEALETEIMLALGYEDPYIAEKE</sequence>
<keyword id="KW-0963">Cytoplasm</keyword>
<keyword id="KW-0255">Endonuclease</keyword>
<keyword id="KW-0378">Hydrolase</keyword>
<keyword id="KW-0479">Metal-binding</keyword>
<keyword id="KW-0540">Nuclease</keyword>
<keyword id="KW-0690">Ribosome biogenesis</keyword>
<keyword id="KW-0698">rRNA processing</keyword>
<keyword id="KW-0862">Zinc</keyword>